<protein>
    <recommendedName>
        <fullName>Centromere protein M</fullName>
        <shortName>CENP-M</shortName>
    </recommendedName>
</protein>
<gene>
    <name type="primary">CENPM</name>
</gene>
<evidence type="ECO:0000250" key="1"/>
<organism>
    <name type="scientific">Bos taurus</name>
    <name type="common">Bovine</name>
    <dbReference type="NCBI Taxonomy" id="9913"/>
    <lineage>
        <taxon>Eukaryota</taxon>
        <taxon>Metazoa</taxon>
        <taxon>Chordata</taxon>
        <taxon>Craniata</taxon>
        <taxon>Vertebrata</taxon>
        <taxon>Euteleostomi</taxon>
        <taxon>Mammalia</taxon>
        <taxon>Eutheria</taxon>
        <taxon>Laurasiatheria</taxon>
        <taxon>Artiodactyla</taxon>
        <taxon>Ruminantia</taxon>
        <taxon>Pecora</taxon>
        <taxon>Bovidae</taxon>
        <taxon>Bovinae</taxon>
        <taxon>Bos</taxon>
    </lineage>
</organism>
<reference key="1">
    <citation type="submission" date="2005-11" db="EMBL/GenBank/DDBJ databases">
        <authorList>
            <consortium name="NIH - Mammalian Gene Collection (MGC) project"/>
        </authorList>
    </citation>
    <scope>NUCLEOTIDE SEQUENCE [LARGE SCALE MRNA]</scope>
    <source>
        <strain>Crossbred X Angus</strain>
        <tissue>Liver</tissue>
    </source>
</reference>
<accession>Q2TBH1</accession>
<sequence length="180" mass="19635">MSALRPLDKLPGLNTATILLVGTEDALLQQLADSMLKADCTSELKVHLARSLPLPCSVNRPRIDLIVFVVNLHSKLSLQSVEESLCHLDAAFFLGKVAFLATGAGRDSHCSIHRNTVVKLAHTYRSPLLFCDLEIEDFRAAMAQRLVRLLQICAGHVPGVSALNLLSLMRGSENPSLEDL</sequence>
<dbReference type="EMBL" id="BC110230">
    <property type="protein sequence ID" value="AAI10231.1"/>
    <property type="molecule type" value="mRNA"/>
</dbReference>
<dbReference type="RefSeq" id="NP_001033775.1">
    <property type="nucleotide sequence ID" value="NM_001038686.2"/>
</dbReference>
<dbReference type="SMR" id="Q2TBH1"/>
<dbReference type="FunCoup" id="Q2TBH1">
    <property type="interactions" value="571"/>
</dbReference>
<dbReference type="STRING" id="9913.ENSBTAP00000072800"/>
<dbReference type="PaxDb" id="9913-ENSBTAP00000013133"/>
<dbReference type="GeneID" id="615953"/>
<dbReference type="KEGG" id="bta:615953"/>
<dbReference type="CTD" id="79019"/>
<dbReference type="VEuPathDB" id="HostDB:ENSBTAG00000009956"/>
<dbReference type="eggNOG" id="ENOG502S17M">
    <property type="taxonomic scope" value="Eukaryota"/>
</dbReference>
<dbReference type="HOGENOM" id="CLU_127179_0_0_1"/>
<dbReference type="InParanoid" id="Q2TBH1"/>
<dbReference type="OMA" id="CTLPLDI"/>
<dbReference type="OrthoDB" id="2386686at2759"/>
<dbReference type="TreeFam" id="TF328778"/>
<dbReference type="Reactome" id="R-BTA-141444">
    <property type="pathway name" value="Amplification of signal from unattached kinetochores via a MAD2 inhibitory signal"/>
</dbReference>
<dbReference type="Reactome" id="R-BTA-2467813">
    <property type="pathway name" value="Separation of Sister Chromatids"/>
</dbReference>
<dbReference type="Reactome" id="R-BTA-2500257">
    <property type="pathway name" value="Resolution of Sister Chromatid Cohesion"/>
</dbReference>
<dbReference type="Reactome" id="R-BTA-5663220">
    <property type="pathway name" value="RHO GTPases Activate Formins"/>
</dbReference>
<dbReference type="Reactome" id="R-BTA-606279">
    <property type="pathway name" value="Deposition of new CENPA-containing nucleosomes at the centromere"/>
</dbReference>
<dbReference type="Reactome" id="R-BTA-68877">
    <property type="pathway name" value="Mitotic Prometaphase"/>
</dbReference>
<dbReference type="Reactome" id="R-BTA-9648025">
    <property type="pathway name" value="EML4 and NUDC in mitotic spindle formation"/>
</dbReference>
<dbReference type="Proteomes" id="UP000009136">
    <property type="component" value="Chromosome 5"/>
</dbReference>
<dbReference type="Bgee" id="ENSBTAG00000009956">
    <property type="expression patterns" value="Expressed in oocyte and 106 other cell types or tissues"/>
</dbReference>
<dbReference type="GO" id="GO:0005737">
    <property type="term" value="C:cytoplasm"/>
    <property type="evidence" value="ECO:0007669"/>
    <property type="project" value="UniProtKB-SubCell"/>
</dbReference>
<dbReference type="GO" id="GO:0000776">
    <property type="term" value="C:kinetochore"/>
    <property type="evidence" value="ECO:0007669"/>
    <property type="project" value="UniProtKB-KW"/>
</dbReference>
<dbReference type="GO" id="GO:0005634">
    <property type="term" value="C:nucleus"/>
    <property type="evidence" value="ECO:0007669"/>
    <property type="project" value="UniProtKB-SubCell"/>
</dbReference>
<dbReference type="FunFam" id="3.40.50.300:FF:001481">
    <property type="entry name" value="Centromere protein M"/>
    <property type="match status" value="1"/>
</dbReference>
<dbReference type="Gene3D" id="3.40.50.300">
    <property type="entry name" value="P-loop containing nucleotide triphosphate hydrolases"/>
    <property type="match status" value="1"/>
</dbReference>
<dbReference type="InterPro" id="IPR020987">
    <property type="entry name" value="Centromere_Cenp-M"/>
</dbReference>
<dbReference type="InterPro" id="IPR027417">
    <property type="entry name" value="P-loop_NTPase"/>
</dbReference>
<dbReference type="PANTHER" id="PTHR34436">
    <property type="entry name" value="CENTROMERE PROTEIN M"/>
    <property type="match status" value="1"/>
</dbReference>
<dbReference type="PANTHER" id="PTHR34436:SF1">
    <property type="entry name" value="CENTROMERE PROTEIN M"/>
    <property type="match status" value="1"/>
</dbReference>
<dbReference type="Pfam" id="PF11111">
    <property type="entry name" value="CENP-M"/>
    <property type="match status" value="1"/>
</dbReference>
<feature type="chain" id="PRO_0000249489" description="Centromere protein M">
    <location>
        <begin position="1"/>
        <end position="180"/>
    </location>
</feature>
<comment type="function">
    <text evidence="1">Component of the CENPA-NAC (nucleosome-associated) complex, a complex that plays a central role in assembly of kinetochore proteins, mitotic progression and chromosome segregation. The CENPA-NAC complex recruits the CENPA-CAD (nucleosome distal) complex and may be involved in incorporation of newly synthesized CENPA into centromeres (By similarity).</text>
</comment>
<comment type="subunit">
    <text evidence="1">Component of the CENPA-NAC complex, at least composed of CENPA, CENPC, CENPH, CENPM, CENPN, CENPT and CENPU. The CENPA-NAC complex interacts with the CENPA-CAD complex, composed of CENPI, CENPK, CENPL, CENPO, CENPP, CENPQ, CENPR and CENPS (By similarity).</text>
</comment>
<comment type="subcellular location">
    <subcellularLocation>
        <location>Nucleus</location>
    </subcellularLocation>
    <subcellularLocation>
        <location>Cytoplasm</location>
    </subcellularLocation>
    <subcellularLocation>
        <location evidence="1">Chromosome</location>
        <location evidence="1">Centromere</location>
        <location evidence="1">Kinetochore</location>
    </subcellularLocation>
    <text evidence="1">Nuclear in non-confluent cells and cytoplasmic in confluent or dividing cells. Localizes in the kinetochore domain of centromeres (By similarity).</text>
</comment>
<name>CENPM_BOVIN</name>
<proteinExistence type="evidence at transcript level"/>
<keyword id="KW-0137">Centromere</keyword>
<keyword id="KW-0158">Chromosome</keyword>
<keyword id="KW-0963">Cytoplasm</keyword>
<keyword id="KW-0995">Kinetochore</keyword>
<keyword id="KW-0539">Nucleus</keyword>
<keyword id="KW-1185">Reference proteome</keyword>